<organism>
    <name type="scientific">Francisella tularensis subsp. holarctica (strain OSU18)</name>
    <dbReference type="NCBI Taxonomy" id="393011"/>
    <lineage>
        <taxon>Bacteria</taxon>
        <taxon>Pseudomonadati</taxon>
        <taxon>Pseudomonadota</taxon>
        <taxon>Gammaproteobacteria</taxon>
        <taxon>Thiotrichales</taxon>
        <taxon>Francisellaceae</taxon>
        <taxon>Francisella</taxon>
    </lineage>
</organism>
<gene>
    <name evidence="1" type="primary">rpsU3</name>
    <name type="ordered locus">FTH_1324</name>
</gene>
<feature type="chain" id="PRO_0000266673" description="Small ribosomal subunit protein bS21C">
    <location>
        <begin position="1"/>
        <end position="66"/>
    </location>
</feature>
<feature type="region of interest" description="Disordered" evidence="2">
    <location>
        <begin position="38"/>
        <end position="66"/>
    </location>
</feature>
<dbReference type="EMBL" id="CP000437">
    <property type="protein sequence ID" value="ABI83158.1"/>
    <property type="molecule type" value="Genomic_DNA"/>
</dbReference>
<dbReference type="SMR" id="Q0BL76"/>
<dbReference type="KEGG" id="fth:FTH_1324"/>
<dbReference type="GO" id="GO:1990904">
    <property type="term" value="C:ribonucleoprotein complex"/>
    <property type="evidence" value="ECO:0007669"/>
    <property type="project" value="UniProtKB-KW"/>
</dbReference>
<dbReference type="GO" id="GO:0005840">
    <property type="term" value="C:ribosome"/>
    <property type="evidence" value="ECO:0007669"/>
    <property type="project" value="UniProtKB-KW"/>
</dbReference>
<dbReference type="GO" id="GO:0003735">
    <property type="term" value="F:structural constituent of ribosome"/>
    <property type="evidence" value="ECO:0007669"/>
    <property type="project" value="InterPro"/>
</dbReference>
<dbReference type="GO" id="GO:0006412">
    <property type="term" value="P:translation"/>
    <property type="evidence" value="ECO:0007669"/>
    <property type="project" value="UniProtKB-UniRule"/>
</dbReference>
<dbReference type="Gene3D" id="1.20.5.1150">
    <property type="entry name" value="Ribosomal protein S8"/>
    <property type="match status" value="1"/>
</dbReference>
<dbReference type="HAMAP" id="MF_00358">
    <property type="entry name" value="Ribosomal_bS21"/>
    <property type="match status" value="1"/>
</dbReference>
<dbReference type="InterPro" id="IPR001911">
    <property type="entry name" value="Ribosomal_bS21"/>
</dbReference>
<dbReference type="InterPro" id="IPR038380">
    <property type="entry name" value="Ribosomal_bS21_sf"/>
</dbReference>
<dbReference type="NCBIfam" id="TIGR00030">
    <property type="entry name" value="S21p"/>
    <property type="match status" value="1"/>
</dbReference>
<dbReference type="Pfam" id="PF01165">
    <property type="entry name" value="Ribosomal_S21"/>
    <property type="match status" value="1"/>
</dbReference>
<dbReference type="PRINTS" id="PR00976">
    <property type="entry name" value="RIBOSOMALS21"/>
</dbReference>
<name>RS213_FRATO</name>
<proteinExistence type="inferred from homology"/>
<keyword id="KW-0687">Ribonucleoprotein</keyword>
<keyword id="KW-0689">Ribosomal protein</keyword>
<sequence length="66" mass="7816">MPRIIVDPKKPFDISLRNFKRACEKAGIKQELRDRQHYVKPTQKRKIAKKAAISKAKKEARRSYSY</sequence>
<accession>Q0BL76</accession>
<reference key="1">
    <citation type="journal article" date="2006" name="J. Bacteriol.">
        <title>Chromosome rearrangement and diversification of Francisella tularensis revealed by the type B (OSU18) genome sequence.</title>
        <authorList>
            <person name="Petrosino J.F."/>
            <person name="Xiang Q."/>
            <person name="Karpathy S.E."/>
            <person name="Jiang H."/>
            <person name="Yerrapragada S."/>
            <person name="Liu Y."/>
            <person name="Gioia J."/>
            <person name="Hemphill L."/>
            <person name="Gonzalez A."/>
            <person name="Raghavan T.M."/>
            <person name="Uzman A."/>
            <person name="Fox G.E."/>
            <person name="Highlander S."/>
            <person name="Reichard M."/>
            <person name="Morton R.J."/>
            <person name="Clinkenbeard K.D."/>
            <person name="Weinstock G.M."/>
        </authorList>
    </citation>
    <scope>NUCLEOTIDE SEQUENCE [LARGE SCALE GENOMIC DNA]</scope>
    <source>
        <strain>OSU18</strain>
    </source>
</reference>
<protein>
    <recommendedName>
        <fullName evidence="1">Small ribosomal subunit protein bS21C</fullName>
    </recommendedName>
    <alternativeName>
        <fullName evidence="3">30S ribosomal protein S21 3</fullName>
    </alternativeName>
</protein>
<evidence type="ECO:0000255" key="1">
    <source>
        <dbReference type="HAMAP-Rule" id="MF_00358"/>
    </source>
</evidence>
<evidence type="ECO:0000256" key="2">
    <source>
        <dbReference type="SAM" id="MobiDB-lite"/>
    </source>
</evidence>
<evidence type="ECO:0000305" key="3"/>
<comment type="similarity">
    <text evidence="1">Belongs to the bacterial ribosomal protein bS21 family.</text>
</comment>